<proteinExistence type="inferred from homology"/>
<organism>
    <name type="scientific">Clostridium botulinum (strain 657 / Type Ba4)</name>
    <dbReference type="NCBI Taxonomy" id="515621"/>
    <lineage>
        <taxon>Bacteria</taxon>
        <taxon>Bacillati</taxon>
        <taxon>Bacillota</taxon>
        <taxon>Clostridia</taxon>
        <taxon>Eubacteriales</taxon>
        <taxon>Clostridiaceae</taxon>
        <taxon>Clostridium</taxon>
    </lineage>
</organism>
<comment type="function">
    <text evidence="1">Endonuclease that is involved in the suppression of homologous recombination and thus may have a key role in the control of bacterial genetic diversity.</text>
</comment>
<comment type="function">
    <text evidence="1">Acts as a ribosome collision sensor, splitting the ribosome into its 2 subunits. Detects stalled/collided 70S ribosomes which it binds and splits by an ATP-hydrolysis driven conformational change. Acts upstream of the ribosome quality control system (RQC), a ribosome-associated complex that mediates the extraction of incompletely synthesized nascent chains from stalled ribosomes and their subsequent degradation. Probably generates substrates for RQC.</text>
</comment>
<comment type="subunit">
    <text evidence="1">Homodimer. Binds to stalled ribosomes, contacting rRNA.</text>
</comment>
<comment type="similarity">
    <text evidence="1">Belongs to the DNA mismatch repair MutS family. MutS2 subfamily.</text>
</comment>
<sequence>MKDKSIKVLEFNKIQEILKNYTCTKAGKDIIEDLKPYDSVYEVREHLEETKEAFKLLITKGAPPFEGVYDIRNGIYLAEKGSALLPGQLLKIAAVLRCARRFREYINHKEQEESYRVLENICEGIFSLPKIEEEIFNAIEGEDEIADRASSTLYNIRRSLKEKNYSVRDKINSLVRSYSSYLQENIYTVRRDRYVLPVKAEHKGAVPGLVHDQSSTGATLFIEPMSLVNLNNEIKELMLKEKAEIERILTVLSAKINANITGVKTDANIVWELDFIFAKAKFASEYNCTCPTINDEGIVDIIEGRHPLIDRREVVPISVKLGEEFTSLMITGPNTGGKTVTLKTVGLIHLMAMSGLMIPARENSVISYFNNVFADIGDEQSIEQSLSTFSSHMKNIVEIMDKADENSLVLFDELGAGTDPTEGAALAISILENLRKRGAKIIATTHYSELKAYALRKEGVENASVEFDVETLRPTYRLLIGIPGKSNAFEISKRLGLPDYIIDFARENISNENIRFEELIQNLQEKSIKAQEDARLAENLKLERDKEKKKYEEKLEGLQKVRDNALIDARREAKNIIKEAKEEADKILKDIRQLERMGYSSDARRKLEEERKKLKDKLDSIEEKEIKTVHKGEALKNVKEGDEVLLASINQKVIVLSKPDNKGDVLVQAGIMKITANIKDLRAAKGSNFNSNSSKTKKSKKLNLNLRKVESSVDLRGMDAEEAIYTVDKYLDEAYLGGLGEVTIVHGKGTGVLRKTIMDMLKGHPHVKRYRLGEYGEGGTGVTVVEIK</sequence>
<keyword id="KW-0067">ATP-binding</keyword>
<keyword id="KW-0238">DNA-binding</keyword>
<keyword id="KW-0255">Endonuclease</keyword>
<keyword id="KW-0378">Hydrolase</keyword>
<keyword id="KW-0540">Nuclease</keyword>
<keyword id="KW-0547">Nucleotide-binding</keyword>
<keyword id="KW-0694">RNA-binding</keyword>
<keyword id="KW-0699">rRNA-binding</keyword>
<dbReference type="EC" id="3.1.-.-" evidence="1"/>
<dbReference type="EC" id="3.6.4.-" evidence="1"/>
<dbReference type="EMBL" id="CP001083">
    <property type="protein sequence ID" value="ACQ53924.1"/>
    <property type="molecule type" value="Genomic_DNA"/>
</dbReference>
<dbReference type="RefSeq" id="WP_003360147.1">
    <property type="nucleotide sequence ID" value="NC_012658.1"/>
</dbReference>
<dbReference type="SMR" id="C3KTI4"/>
<dbReference type="KEGG" id="cbi:CLJ_B3388"/>
<dbReference type="HOGENOM" id="CLU_011252_2_1_9"/>
<dbReference type="Proteomes" id="UP000002333">
    <property type="component" value="Chromosome"/>
</dbReference>
<dbReference type="GO" id="GO:0005524">
    <property type="term" value="F:ATP binding"/>
    <property type="evidence" value="ECO:0007669"/>
    <property type="project" value="UniProtKB-UniRule"/>
</dbReference>
<dbReference type="GO" id="GO:0016887">
    <property type="term" value="F:ATP hydrolysis activity"/>
    <property type="evidence" value="ECO:0007669"/>
    <property type="project" value="InterPro"/>
</dbReference>
<dbReference type="GO" id="GO:0140664">
    <property type="term" value="F:ATP-dependent DNA damage sensor activity"/>
    <property type="evidence" value="ECO:0007669"/>
    <property type="project" value="InterPro"/>
</dbReference>
<dbReference type="GO" id="GO:0004519">
    <property type="term" value="F:endonuclease activity"/>
    <property type="evidence" value="ECO:0007669"/>
    <property type="project" value="UniProtKB-UniRule"/>
</dbReference>
<dbReference type="GO" id="GO:0030983">
    <property type="term" value="F:mismatched DNA binding"/>
    <property type="evidence" value="ECO:0007669"/>
    <property type="project" value="InterPro"/>
</dbReference>
<dbReference type="GO" id="GO:0043023">
    <property type="term" value="F:ribosomal large subunit binding"/>
    <property type="evidence" value="ECO:0007669"/>
    <property type="project" value="UniProtKB-UniRule"/>
</dbReference>
<dbReference type="GO" id="GO:0019843">
    <property type="term" value="F:rRNA binding"/>
    <property type="evidence" value="ECO:0007669"/>
    <property type="project" value="UniProtKB-UniRule"/>
</dbReference>
<dbReference type="GO" id="GO:0006298">
    <property type="term" value="P:mismatch repair"/>
    <property type="evidence" value="ECO:0007669"/>
    <property type="project" value="InterPro"/>
</dbReference>
<dbReference type="GO" id="GO:0045910">
    <property type="term" value="P:negative regulation of DNA recombination"/>
    <property type="evidence" value="ECO:0007669"/>
    <property type="project" value="InterPro"/>
</dbReference>
<dbReference type="GO" id="GO:0072344">
    <property type="term" value="P:rescue of stalled ribosome"/>
    <property type="evidence" value="ECO:0007669"/>
    <property type="project" value="UniProtKB-UniRule"/>
</dbReference>
<dbReference type="CDD" id="cd03280">
    <property type="entry name" value="ABC_MutS2"/>
    <property type="match status" value="1"/>
</dbReference>
<dbReference type="FunFam" id="3.30.1370.110:FF:000007">
    <property type="entry name" value="Endonuclease MutS2"/>
    <property type="match status" value="1"/>
</dbReference>
<dbReference type="FunFam" id="3.40.50.300:FF:000830">
    <property type="entry name" value="Endonuclease MutS2"/>
    <property type="match status" value="1"/>
</dbReference>
<dbReference type="Gene3D" id="3.30.1370.110">
    <property type="match status" value="1"/>
</dbReference>
<dbReference type="Gene3D" id="3.40.50.300">
    <property type="entry name" value="P-loop containing nucleotide triphosphate hydrolases"/>
    <property type="match status" value="1"/>
</dbReference>
<dbReference type="HAMAP" id="MF_00092">
    <property type="entry name" value="MutS2"/>
    <property type="match status" value="1"/>
</dbReference>
<dbReference type="InterPro" id="IPR000432">
    <property type="entry name" value="DNA_mismatch_repair_MutS_C"/>
</dbReference>
<dbReference type="InterPro" id="IPR007696">
    <property type="entry name" value="DNA_mismatch_repair_MutS_core"/>
</dbReference>
<dbReference type="InterPro" id="IPR036187">
    <property type="entry name" value="DNA_mismatch_repair_MutS_sf"/>
</dbReference>
<dbReference type="InterPro" id="IPR046893">
    <property type="entry name" value="MSSS"/>
</dbReference>
<dbReference type="InterPro" id="IPR045076">
    <property type="entry name" value="MutS"/>
</dbReference>
<dbReference type="InterPro" id="IPR005747">
    <property type="entry name" value="MutS2"/>
</dbReference>
<dbReference type="InterPro" id="IPR027417">
    <property type="entry name" value="P-loop_NTPase"/>
</dbReference>
<dbReference type="InterPro" id="IPR002625">
    <property type="entry name" value="Smr_dom"/>
</dbReference>
<dbReference type="InterPro" id="IPR036063">
    <property type="entry name" value="Smr_dom_sf"/>
</dbReference>
<dbReference type="NCBIfam" id="TIGR01069">
    <property type="entry name" value="mutS2"/>
    <property type="match status" value="1"/>
</dbReference>
<dbReference type="PANTHER" id="PTHR48466:SF2">
    <property type="entry name" value="OS10G0509000 PROTEIN"/>
    <property type="match status" value="1"/>
</dbReference>
<dbReference type="PANTHER" id="PTHR48466">
    <property type="entry name" value="OS10G0509000 PROTEIN-RELATED"/>
    <property type="match status" value="1"/>
</dbReference>
<dbReference type="Pfam" id="PF20297">
    <property type="entry name" value="MSSS"/>
    <property type="match status" value="1"/>
</dbReference>
<dbReference type="Pfam" id="PF00488">
    <property type="entry name" value="MutS_V"/>
    <property type="match status" value="1"/>
</dbReference>
<dbReference type="Pfam" id="PF01713">
    <property type="entry name" value="Smr"/>
    <property type="match status" value="1"/>
</dbReference>
<dbReference type="PIRSF" id="PIRSF005814">
    <property type="entry name" value="MutS_YshD"/>
    <property type="match status" value="1"/>
</dbReference>
<dbReference type="SMART" id="SM00534">
    <property type="entry name" value="MUTSac"/>
    <property type="match status" value="1"/>
</dbReference>
<dbReference type="SMART" id="SM00533">
    <property type="entry name" value="MUTSd"/>
    <property type="match status" value="1"/>
</dbReference>
<dbReference type="SMART" id="SM00463">
    <property type="entry name" value="SMR"/>
    <property type="match status" value="1"/>
</dbReference>
<dbReference type="SUPFAM" id="SSF48334">
    <property type="entry name" value="DNA repair protein MutS, domain III"/>
    <property type="match status" value="1"/>
</dbReference>
<dbReference type="SUPFAM" id="SSF52540">
    <property type="entry name" value="P-loop containing nucleoside triphosphate hydrolases"/>
    <property type="match status" value="1"/>
</dbReference>
<dbReference type="SUPFAM" id="SSF160443">
    <property type="entry name" value="SMR domain-like"/>
    <property type="match status" value="1"/>
</dbReference>
<dbReference type="PROSITE" id="PS00486">
    <property type="entry name" value="DNA_MISMATCH_REPAIR_2"/>
    <property type="match status" value="1"/>
</dbReference>
<dbReference type="PROSITE" id="PS50828">
    <property type="entry name" value="SMR"/>
    <property type="match status" value="1"/>
</dbReference>
<reference key="1">
    <citation type="submission" date="2008-05" db="EMBL/GenBank/DDBJ databases">
        <title>Genome sequence of Clostridium botulinum Ba4 strain 657.</title>
        <authorList>
            <person name="Shrivastava S."/>
            <person name="Brown J.L."/>
            <person name="Bruce D."/>
            <person name="Detter C."/>
            <person name="Munk C."/>
            <person name="Smith L.A."/>
            <person name="Smith T.J."/>
            <person name="Sutton G."/>
            <person name="Brettin T.S."/>
        </authorList>
    </citation>
    <scope>NUCLEOTIDE SEQUENCE [LARGE SCALE GENOMIC DNA]</scope>
    <source>
        <strain>657 / Type Ba4</strain>
    </source>
</reference>
<feature type="chain" id="PRO_1000202676" description="Endonuclease MutS2">
    <location>
        <begin position="1"/>
        <end position="788"/>
    </location>
</feature>
<feature type="domain" description="Smr" evidence="1">
    <location>
        <begin position="713"/>
        <end position="788"/>
    </location>
</feature>
<feature type="binding site" evidence="1">
    <location>
        <begin position="332"/>
        <end position="339"/>
    </location>
    <ligand>
        <name>ATP</name>
        <dbReference type="ChEBI" id="CHEBI:30616"/>
    </ligand>
</feature>
<name>MUTS2_CLOB6</name>
<protein>
    <recommendedName>
        <fullName evidence="1">Endonuclease MutS2</fullName>
        <ecNumber evidence="1">3.1.-.-</ecNumber>
    </recommendedName>
    <alternativeName>
        <fullName evidence="1">Ribosome-associated protein quality control-upstream factor</fullName>
        <shortName evidence="1">RQC-upstream factor</shortName>
        <shortName evidence="1">RqcU</shortName>
        <ecNumber evidence="1">3.6.4.-</ecNumber>
    </alternativeName>
</protein>
<gene>
    <name evidence="1" type="primary">mutS2</name>
    <name evidence="1" type="synonym">rqcU</name>
    <name type="ordered locus">CLJ_B3388</name>
</gene>
<evidence type="ECO:0000255" key="1">
    <source>
        <dbReference type="HAMAP-Rule" id="MF_00092"/>
    </source>
</evidence>
<accession>C3KTI4</accession>